<protein>
    <recommendedName>
        <fullName>Speedy protein A</fullName>
    </recommendedName>
    <alternativeName>
        <fullName>Rapid inducer of G2/M progression in oocytes A</fullName>
        <shortName>RINGO A</shortName>
        <shortName>hSpy/Ringo A</shortName>
    </alternativeName>
    <alternativeName>
        <fullName>Speedy-1</fullName>
        <shortName>Spy1</shortName>
    </alternativeName>
</protein>
<comment type="function">
    <text evidence="3 4 5 8">Regulates the G1/S phase transition of the cell cycle by binding and activating CDK1 and CDK2 (PubMed:12972555). Contributes to CDK2 activation without promoting CDK2 phosphorylation, by inducing a conformation change of the CDK2 T-loop that obstructs the substrate-binding cleft prior to kinase activation (PubMed:28666995). Mediates cell survival during the DNA damage process through activation of CDK2 (PubMed:12839962).</text>
</comment>
<comment type="subunit">
    <text evidence="1 3 4 5 8">Interacts with CDK1 (By similarity). Interacts with CDK2 (PubMed:11980914, PubMed:12839962, PubMed:12972555, PubMed:28666995). May interact with CDKN1B/KIP1 (PubMed:12972555). Identified in a complex with CDK2 and CDKN1B/KIP1, where it interacts primarily with CDK2 (PubMed:12972555, PubMed:28666995).</text>
</comment>
<comment type="interaction">
    <interactant intactId="EBI-7125479">
        <id>Q5MJ70</id>
    </interactant>
    <interactant intactId="EBI-745213">
        <id>P29972</id>
        <label>AQP1</label>
    </interactant>
    <organismsDiffer>false</organismsDiffer>
    <experiments>3</experiments>
</comment>
<comment type="interaction">
    <interactant intactId="EBI-7125479">
        <id>Q5MJ70</id>
    </interactant>
    <interactant intactId="EBI-1041567">
        <id>Q00535</id>
        <label>CDK5</label>
    </interactant>
    <organismsDiffer>false</organismsDiffer>
    <experiments>3</experiments>
</comment>
<comment type="interaction">
    <interactant intactId="EBI-7125479">
        <id>Q5MJ70</id>
    </interactant>
    <interactant intactId="EBI-519280">
        <id>P46527</id>
        <label>CDKN1B</label>
    </interactant>
    <organismsDiffer>false</organismsDiffer>
    <experiments>3</experiments>
</comment>
<comment type="subcellular location">
    <subcellularLocation>
        <location evidence="3 5">Nucleus</location>
    </subcellularLocation>
</comment>
<comment type="alternative products">
    <event type="alternative splicing"/>
    <isoform>
        <id>Q5MJ70-2</id>
        <name evidence="6 7">2</name>
        <name evidence="6">A2</name>
        <sequence type="displayed"/>
    </isoform>
    <isoform>
        <id>Q5MJ70-1</id>
        <name evidence="6">1</name>
        <name evidence="6">A1</name>
        <sequence type="described" ref="VSP_052027 VSP_052028"/>
    </isoform>
</comment>
<comment type="tissue specificity">
    <text evidence="3 6">Highly expressed in testis. Expressed at a low level in wide range of tissues including bone marrow, brain, heart, kidney, colon, liver, placenta, spleen, skeletal muscle, salivary gland, thyroid gland, thymus, trachea and uterus. Expressed at a slightly higher level in adrenal gland, cerebellum, small intestine, lung, prostate and trachea. Expression is cell cycle-dependent, being restricted to cells in G1/S phase.</text>
</comment>
<comment type="domain">
    <text evidence="1">The C-terminus is required for CDK2-activation, but not CDK2-binding.</text>
</comment>
<comment type="similarity">
    <text evidence="11">Belongs to the Speedy/Ringo family.</text>
</comment>
<evidence type="ECO:0000250" key="1">
    <source>
        <dbReference type="UniProtKB" id="Q5IBH7"/>
    </source>
</evidence>
<evidence type="ECO:0000256" key="2">
    <source>
        <dbReference type="SAM" id="MobiDB-lite"/>
    </source>
</evidence>
<evidence type="ECO:0000269" key="3">
    <source>
    </source>
</evidence>
<evidence type="ECO:0000269" key="4">
    <source>
    </source>
</evidence>
<evidence type="ECO:0000269" key="5">
    <source>
    </source>
</evidence>
<evidence type="ECO:0000269" key="6">
    <source>
    </source>
</evidence>
<evidence type="ECO:0000269" key="7">
    <source>
    </source>
</evidence>
<evidence type="ECO:0000269" key="8">
    <source>
    </source>
</evidence>
<evidence type="ECO:0000303" key="9">
    <source>
    </source>
</evidence>
<evidence type="ECO:0000303" key="10">
    <source>
    </source>
</evidence>
<evidence type="ECO:0000305" key="11"/>
<evidence type="ECO:0000312" key="12">
    <source>
        <dbReference type="EMBL" id="AAH93005.1"/>
    </source>
</evidence>
<evidence type="ECO:0000312" key="13">
    <source>
        <dbReference type="EMBL" id="AAW30394.1"/>
    </source>
</evidence>
<evidence type="ECO:0000312" key="14">
    <source>
        <dbReference type="EMBL" id="AAW30395.1"/>
    </source>
</evidence>
<evidence type="ECO:0000312" key="15">
    <source>
        <dbReference type="EMBL" id="AAY24014.1"/>
    </source>
</evidence>
<evidence type="ECO:0000312" key="16">
    <source>
        <dbReference type="HGNC" id="HGNC:30613"/>
    </source>
</evidence>
<evidence type="ECO:0007744" key="17">
    <source>
        <dbReference type="PDB" id="5UQ1"/>
    </source>
</evidence>
<evidence type="ECO:0007744" key="18">
    <source>
        <dbReference type="PDB" id="5UQ2"/>
    </source>
</evidence>
<evidence type="ECO:0007744" key="19">
    <source>
        <dbReference type="PDB" id="5UQ3"/>
    </source>
</evidence>
<evidence type="ECO:0007829" key="20">
    <source>
        <dbReference type="PDB" id="5UQ1"/>
    </source>
</evidence>
<evidence type="ECO:0007829" key="21">
    <source>
        <dbReference type="PDB" id="5UQ2"/>
    </source>
</evidence>
<evidence type="ECO:0007829" key="22">
    <source>
        <dbReference type="PDB" id="7E34"/>
    </source>
</evidence>
<name>SPDYA_HUMAN</name>
<reference evidence="11" key="1">
    <citation type="journal article" date="2002" name="J. Cell Biol.">
        <title>Human Speedy: a novel cell cycle regulator that enhances proliferation through activation of Cdk2.</title>
        <authorList>
            <person name="Porter L.A."/>
            <person name="Dellinger R.W."/>
            <person name="Tynan J.A."/>
            <person name="Barnes E.A."/>
            <person name="Kong M."/>
            <person name="Lenormand J.-L."/>
            <person name="Donoghue D.J."/>
        </authorList>
    </citation>
    <scope>NUCLEOTIDE SEQUENCE [MRNA] (ISOFORM 1)</scope>
    <scope>FUNCTION</scope>
    <scope>INTERACTION WITH CDK2</scope>
    <scope>SUBCELLULAR LOCATION</scope>
    <scope>TISSUE SPECIFICITY</scope>
    <source>
        <tissue evidence="3">Testis</tissue>
    </source>
</reference>
<reference evidence="11 14" key="2">
    <citation type="journal article" date="2005" name="Cell Cycle">
        <title>Identification and comparative analysis of multiple mammalian Speedy/Ringo proteins.</title>
        <authorList>
            <person name="Cheng A."/>
            <person name="Xiong W."/>
            <person name="Ferrell J.E. Jr."/>
            <person name="Solomon M.J."/>
        </authorList>
    </citation>
    <scope>NUCLEOTIDE SEQUENCE [MRNA] (ISOFORMS 1 AND 2)</scope>
    <scope>TISSUE SPECIFICITY</scope>
    <source>
        <tissue evidence="13">Testis</tissue>
    </source>
</reference>
<reference evidence="11 15" key="3">
    <citation type="journal article" date="2005" name="Nature">
        <title>Generation and annotation of the DNA sequences of human chromosomes 2 and 4.</title>
        <authorList>
            <person name="Hillier L.W."/>
            <person name="Graves T.A."/>
            <person name="Fulton R.S."/>
            <person name="Fulton L.A."/>
            <person name="Pepin K.H."/>
            <person name="Minx P."/>
            <person name="Wagner-McPherson C."/>
            <person name="Layman D."/>
            <person name="Wylie K."/>
            <person name="Sekhon M."/>
            <person name="Becker M.C."/>
            <person name="Fewell G.A."/>
            <person name="Delehaunty K.D."/>
            <person name="Miner T.L."/>
            <person name="Nash W.E."/>
            <person name="Kremitzki C."/>
            <person name="Oddy L."/>
            <person name="Du H."/>
            <person name="Sun H."/>
            <person name="Bradshaw-Cordum H."/>
            <person name="Ali J."/>
            <person name="Carter J."/>
            <person name="Cordes M."/>
            <person name="Harris A."/>
            <person name="Isak A."/>
            <person name="van Brunt A."/>
            <person name="Nguyen C."/>
            <person name="Du F."/>
            <person name="Courtney L."/>
            <person name="Kalicki J."/>
            <person name="Ozersky P."/>
            <person name="Abbott S."/>
            <person name="Armstrong J."/>
            <person name="Belter E.A."/>
            <person name="Caruso L."/>
            <person name="Cedroni M."/>
            <person name="Cotton M."/>
            <person name="Davidson T."/>
            <person name="Desai A."/>
            <person name="Elliott G."/>
            <person name="Erb T."/>
            <person name="Fronick C."/>
            <person name="Gaige T."/>
            <person name="Haakenson W."/>
            <person name="Haglund K."/>
            <person name="Holmes A."/>
            <person name="Harkins R."/>
            <person name="Kim K."/>
            <person name="Kruchowski S.S."/>
            <person name="Strong C.M."/>
            <person name="Grewal N."/>
            <person name="Goyea E."/>
            <person name="Hou S."/>
            <person name="Levy A."/>
            <person name="Martinka S."/>
            <person name="Mead K."/>
            <person name="McLellan M.D."/>
            <person name="Meyer R."/>
            <person name="Randall-Maher J."/>
            <person name="Tomlinson C."/>
            <person name="Dauphin-Kohlberg S."/>
            <person name="Kozlowicz-Reilly A."/>
            <person name="Shah N."/>
            <person name="Swearengen-Shahid S."/>
            <person name="Snider J."/>
            <person name="Strong J.T."/>
            <person name="Thompson J."/>
            <person name="Yoakum M."/>
            <person name="Leonard S."/>
            <person name="Pearman C."/>
            <person name="Trani L."/>
            <person name="Radionenko M."/>
            <person name="Waligorski J.E."/>
            <person name="Wang C."/>
            <person name="Rock S.M."/>
            <person name="Tin-Wollam A.-M."/>
            <person name="Maupin R."/>
            <person name="Latreille P."/>
            <person name="Wendl M.C."/>
            <person name="Yang S.-P."/>
            <person name="Pohl C."/>
            <person name="Wallis J.W."/>
            <person name="Spieth J."/>
            <person name="Bieri T.A."/>
            <person name="Berkowicz N."/>
            <person name="Nelson J.O."/>
            <person name="Osborne J."/>
            <person name="Ding L."/>
            <person name="Meyer R."/>
            <person name="Sabo A."/>
            <person name="Shotland Y."/>
            <person name="Sinha P."/>
            <person name="Wohldmann P.E."/>
            <person name="Cook L.L."/>
            <person name="Hickenbotham M.T."/>
            <person name="Eldred J."/>
            <person name="Williams D."/>
            <person name="Jones T.A."/>
            <person name="She X."/>
            <person name="Ciccarelli F.D."/>
            <person name="Izaurralde E."/>
            <person name="Taylor J."/>
            <person name="Schmutz J."/>
            <person name="Myers R.M."/>
            <person name="Cox D.R."/>
            <person name="Huang X."/>
            <person name="McPherson J.D."/>
            <person name="Mardis E.R."/>
            <person name="Clifton S.W."/>
            <person name="Warren W.C."/>
            <person name="Chinwalla A.T."/>
            <person name="Eddy S.R."/>
            <person name="Marra M.A."/>
            <person name="Ovcharenko I."/>
            <person name="Furey T.S."/>
            <person name="Miller W."/>
            <person name="Eichler E.E."/>
            <person name="Bork P."/>
            <person name="Suyama M."/>
            <person name="Torrents D."/>
            <person name="Waterston R.H."/>
            <person name="Wilson R.K."/>
        </authorList>
    </citation>
    <scope>NUCLEOTIDE SEQUENCE [LARGE SCALE GENOMIC DNA]</scope>
</reference>
<reference evidence="11 12" key="4">
    <citation type="journal article" date="2004" name="Genome Res.">
        <title>The status, quality, and expansion of the NIH full-length cDNA project: the Mammalian Gene Collection (MGC).</title>
        <authorList>
            <consortium name="The MGC Project Team"/>
        </authorList>
    </citation>
    <scope>NUCLEOTIDE SEQUENCE [LARGE SCALE MRNA] (ISOFORM 2)</scope>
    <source>
        <tissue evidence="12">Testis</tissue>
    </source>
</reference>
<reference evidence="11" key="5">
    <citation type="journal article" date="2003" name="Cancer Res.">
        <title>Human Spy1 promotes survival of mammalian cells following DNA damage.</title>
        <authorList>
            <person name="Barnes E.A."/>
            <person name="Porter L.A."/>
            <person name="Lenormand J.-L."/>
            <person name="Dellinger R.W."/>
            <person name="Donoghue D.J."/>
        </authorList>
    </citation>
    <scope>FUNCTION</scope>
    <scope>INTERACTION WITH CDK2</scope>
</reference>
<reference evidence="11" key="6">
    <citation type="journal article" date="2003" name="Mol. Biol. Cell">
        <title>Spy1 interacts with p27Kip1 to allow G1/S progression.</title>
        <authorList>
            <person name="Porter L.A."/>
            <person name="Kong-Beltran M."/>
            <person name="Donoghue D.J."/>
        </authorList>
    </citation>
    <scope>FUNCTION</scope>
    <scope>INTERACTION WITH CDKN1B</scope>
    <scope>IDENTIFICATION IN A COMPLEX WITH CDKN1B AND CDK2</scope>
    <scope>SUBCELLULAR LOCATION</scope>
</reference>
<reference evidence="17 18 19" key="7">
    <citation type="journal article" date="2017" name="EMBO J.">
        <title>Structural basis of divergent cyclin-dependent kinase activation by Spy1/RINGO proteins.</title>
        <authorList>
            <person name="McGrath D.A."/>
            <person name="Fifield B.A."/>
            <person name="Marceau A.H."/>
            <person name="Tripathi S."/>
            <person name="Porter L.A."/>
            <person name="Rubin S.M."/>
        </authorList>
    </citation>
    <scope>X-RAY CRYSTALLOGRAPHY (2.70 ANGSTROMS) OF 61-213 IN COMPLEXES WITH CDK2 AND CDKN1B</scope>
    <scope>SUBUNIT</scope>
    <scope>FUNCTION</scope>
    <scope>INTERACTION WITH CDK2</scope>
    <scope>REGION</scope>
    <scope>MUTAGENESIS OF ASP-97 AND GLU-135</scope>
</reference>
<organism>
    <name type="scientific">Homo sapiens</name>
    <name type="common">Human</name>
    <dbReference type="NCBI Taxonomy" id="9606"/>
    <lineage>
        <taxon>Eukaryota</taxon>
        <taxon>Metazoa</taxon>
        <taxon>Chordata</taxon>
        <taxon>Craniata</taxon>
        <taxon>Vertebrata</taxon>
        <taxon>Euteleostomi</taxon>
        <taxon>Mammalia</taxon>
        <taxon>Eutheria</taxon>
        <taxon>Euarchontoglires</taxon>
        <taxon>Primates</taxon>
        <taxon>Haplorrhini</taxon>
        <taxon>Catarrhini</taxon>
        <taxon>Hominidae</taxon>
        <taxon>Homo</taxon>
    </lineage>
</organism>
<dbReference type="EMBL" id="AY820303">
    <property type="protein sequence ID" value="AAW30394.1"/>
    <property type="molecule type" value="mRNA"/>
</dbReference>
<dbReference type="EMBL" id="AY820304">
    <property type="protein sequence ID" value="AAW30395.1"/>
    <property type="molecule type" value="mRNA"/>
</dbReference>
<dbReference type="EMBL" id="AC097720">
    <property type="protein sequence ID" value="AAY24014.1"/>
    <property type="molecule type" value="Genomic_DNA"/>
</dbReference>
<dbReference type="EMBL" id="BC093005">
    <property type="protein sequence ID" value="AAH93005.1"/>
    <property type="molecule type" value="mRNA"/>
</dbReference>
<dbReference type="CCDS" id="CCDS1767.2">
    <molecule id="Q5MJ70-2"/>
</dbReference>
<dbReference type="RefSeq" id="NP_001008779.1">
    <molecule id="Q5MJ70-1"/>
    <property type="nucleotide sequence ID" value="NM_001008779.1"/>
</dbReference>
<dbReference type="RefSeq" id="NP_001136106.1">
    <molecule id="Q5MJ70-2"/>
    <property type="nucleotide sequence ID" value="NM_001142634.2"/>
</dbReference>
<dbReference type="RefSeq" id="NP_877433.2">
    <molecule id="Q5MJ70-2"/>
    <property type="nucleotide sequence ID" value="NM_182756.4"/>
</dbReference>
<dbReference type="PDB" id="5UQ1">
    <property type="method" value="X-ray"/>
    <property type="resolution" value="3.20 A"/>
    <property type="chains" value="B/D=61-213"/>
</dbReference>
<dbReference type="PDB" id="5UQ2">
    <property type="method" value="X-ray"/>
    <property type="resolution" value="2.70 A"/>
    <property type="chains" value="B=61-213"/>
</dbReference>
<dbReference type="PDB" id="5UQ3">
    <property type="method" value="X-ray"/>
    <property type="resolution" value="3.60 A"/>
    <property type="chains" value="B=61-213"/>
</dbReference>
<dbReference type="PDB" id="7E34">
    <property type="method" value="X-ray"/>
    <property type="resolution" value="3.19 A"/>
    <property type="chains" value="B=61-213"/>
</dbReference>
<dbReference type="PDBsum" id="5UQ1"/>
<dbReference type="PDBsum" id="5UQ2"/>
<dbReference type="PDBsum" id="5UQ3"/>
<dbReference type="PDBsum" id="7E34"/>
<dbReference type="SMR" id="Q5MJ70"/>
<dbReference type="BioGRID" id="128828">
    <property type="interactions" value="12"/>
</dbReference>
<dbReference type="FunCoup" id="Q5MJ70">
    <property type="interactions" value="1839"/>
</dbReference>
<dbReference type="IntAct" id="Q5MJ70">
    <property type="interactions" value="6"/>
</dbReference>
<dbReference type="MINT" id="Q5MJ70"/>
<dbReference type="STRING" id="9606.ENSP00000335628"/>
<dbReference type="GlyGen" id="Q5MJ70">
    <property type="glycosylation" value="1 site"/>
</dbReference>
<dbReference type="iPTMnet" id="Q5MJ70"/>
<dbReference type="PhosphoSitePlus" id="Q5MJ70"/>
<dbReference type="BioMuta" id="SPDYA"/>
<dbReference type="DMDM" id="94730574"/>
<dbReference type="MassIVE" id="Q5MJ70"/>
<dbReference type="PaxDb" id="9606-ENSP00000335628"/>
<dbReference type="PeptideAtlas" id="Q5MJ70"/>
<dbReference type="ProteomicsDB" id="63585">
    <molecule id="Q5MJ70-2"/>
</dbReference>
<dbReference type="ProteomicsDB" id="63586">
    <molecule id="Q5MJ70-1"/>
</dbReference>
<dbReference type="Antibodypedia" id="28865">
    <property type="antibodies" value="220 antibodies from 27 providers"/>
</dbReference>
<dbReference type="DNASU" id="245711"/>
<dbReference type="Ensembl" id="ENST00000334056.10">
    <molecule id="Q5MJ70-2"/>
    <property type="protein sequence ID" value="ENSP00000335628.5"/>
    <property type="gene ID" value="ENSG00000163806.16"/>
</dbReference>
<dbReference type="Ensembl" id="ENST00000379579.8">
    <molecule id="Q5MJ70-2"/>
    <property type="protein sequence ID" value="ENSP00000368898.4"/>
    <property type="gene ID" value="ENSG00000163806.16"/>
</dbReference>
<dbReference type="GeneID" id="245711"/>
<dbReference type="KEGG" id="hsa:245711"/>
<dbReference type="MANE-Select" id="ENST00000334056.10">
    <property type="protein sequence ID" value="ENSP00000335628.5"/>
    <property type="RefSeq nucleotide sequence ID" value="NM_182756.4"/>
    <property type="RefSeq protein sequence ID" value="NP_877433.2"/>
</dbReference>
<dbReference type="UCSC" id="uc002rmj.4">
    <molecule id="Q5MJ70-2"/>
    <property type="organism name" value="human"/>
</dbReference>
<dbReference type="AGR" id="HGNC:30613"/>
<dbReference type="CTD" id="245711"/>
<dbReference type="DisGeNET" id="245711"/>
<dbReference type="GeneCards" id="SPDYA"/>
<dbReference type="HGNC" id="HGNC:30613">
    <property type="gene designation" value="SPDYA"/>
</dbReference>
<dbReference type="HPA" id="ENSG00000163806">
    <property type="expression patterns" value="Tissue enriched (testis)"/>
</dbReference>
<dbReference type="MIM" id="614029">
    <property type="type" value="gene"/>
</dbReference>
<dbReference type="neXtProt" id="NX_Q5MJ70"/>
<dbReference type="OpenTargets" id="ENSG00000163806"/>
<dbReference type="PharmGKB" id="PA134954857"/>
<dbReference type="VEuPathDB" id="HostDB:ENSG00000163806"/>
<dbReference type="eggNOG" id="KOG3938">
    <property type="taxonomic scope" value="Eukaryota"/>
</dbReference>
<dbReference type="GeneTree" id="ENSGT00940000154524"/>
<dbReference type="HOGENOM" id="CLU_070353_1_2_1"/>
<dbReference type="InParanoid" id="Q5MJ70"/>
<dbReference type="OMA" id="VCQTPPT"/>
<dbReference type="OrthoDB" id="9442170at2759"/>
<dbReference type="PAN-GO" id="Q5MJ70">
    <property type="GO annotations" value="5 GO annotations based on evolutionary models"/>
</dbReference>
<dbReference type="PhylomeDB" id="Q5MJ70"/>
<dbReference type="TreeFam" id="TF329827"/>
<dbReference type="PathwayCommons" id="Q5MJ70"/>
<dbReference type="SignaLink" id="Q5MJ70"/>
<dbReference type="SIGNOR" id="Q5MJ70"/>
<dbReference type="BioGRID-ORCS" id="245711">
    <property type="hits" value="8 hits in 1148 CRISPR screens"/>
</dbReference>
<dbReference type="ChiTaRS" id="SPDYA">
    <property type="organism name" value="human"/>
</dbReference>
<dbReference type="GeneWiki" id="SPDYA"/>
<dbReference type="GenomeRNAi" id="245711"/>
<dbReference type="Pharos" id="Q5MJ70">
    <property type="development level" value="Tbio"/>
</dbReference>
<dbReference type="PRO" id="PR:Q5MJ70"/>
<dbReference type="Proteomes" id="UP000005640">
    <property type="component" value="Chromosome 2"/>
</dbReference>
<dbReference type="RNAct" id="Q5MJ70">
    <property type="molecule type" value="protein"/>
</dbReference>
<dbReference type="Bgee" id="ENSG00000163806">
    <property type="expression patterns" value="Expressed in left testis and 99 other cell types or tissues"/>
</dbReference>
<dbReference type="ExpressionAtlas" id="Q5MJ70">
    <property type="expression patterns" value="baseline and differential"/>
</dbReference>
<dbReference type="GO" id="GO:0000781">
    <property type="term" value="C:chromosome, telomeric region"/>
    <property type="evidence" value="ECO:0007669"/>
    <property type="project" value="Ensembl"/>
</dbReference>
<dbReference type="GO" id="GO:0005635">
    <property type="term" value="C:nuclear envelope"/>
    <property type="evidence" value="ECO:0007669"/>
    <property type="project" value="Ensembl"/>
</dbReference>
<dbReference type="GO" id="GO:0005654">
    <property type="term" value="C:nucleoplasm"/>
    <property type="evidence" value="ECO:0000314"/>
    <property type="project" value="HPA"/>
</dbReference>
<dbReference type="GO" id="GO:0005634">
    <property type="term" value="C:nucleus"/>
    <property type="evidence" value="ECO:0000314"/>
    <property type="project" value="UniProtKB"/>
</dbReference>
<dbReference type="GO" id="GO:0001741">
    <property type="term" value="C:XY body"/>
    <property type="evidence" value="ECO:0007669"/>
    <property type="project" value="Ensembl"/>
</dbReference>
<dbReference type="GO" id="GO:0030295">
    <property type="term" value="F:protein kinase activator activity"/>
    <property type="evidence" value="ECO:0000314"/>
    <property type="project" value="UniProtKB"/>
</dbReference>
<dbReference type="GO" id="GO:0019901">
    <property type="term" value="F:protein kinase binding"/>
    <property type="evidence" value="ECO:0000353"/>
    <property type="project" value="UniProtKB"/>
</dbReference>
<dbReference type="GO" id="GO:0006974">
    <property type="term" value="P:DNA damage response"/>
    <property type="evidence" value="ECO:0000314"/>
    <property type="project" value="UniProtKB"/>
</dbReference>
<dbReference type="GO" id="GO:0070200">
    <property type="term" value="P:establishment of protein localization to telomere"/>
    <property type="evidence" value="ECO:0007669"/>
    <property type="project" value="Ensembl"/>
</dbReference>
<dbReference type="GO" id="GO:0000082">
    <property type="term" value="P:G1/S transition of mitotic cell cycle"/>
    <property type="evidence" value="ECO:0000314"/>
    <property type="project" value="UniProtKB"/>
</dbReference>
<dbReference type="GO" id="GO:0007140">
    <property type="term" value="P:male meiotic nuclear division"/>
    <property type="evidence" value="ECO:0000250"/>
    <property type="project" value="UniProtKB"/>
</dbReference>
<dbReference type="GO" id="GO:0070197">
    <property type="term" value="P:meiotic attachment of telomere to nuclear envelope"/>
    <property type="evidence" value="ECO:0007669"/>
    <property type="project" value="Ensembl"/>
</dbReference>
<dbReference type="GO" id="GO:0048477">
    <property type="term" value="P:oogenesis"/>
    <property type="evidence" value="ECO:0007669"/>
    <property type="project" value="Ensembl"/>
</dbReference>
<dbReference type="GO" id="GO:0008284">
    <property type="term" value="P:positive regulation of cell population proliferation"/>
    <property type="evidence" value="ECO:0000314"/>
    <property type="project" value="UniProtKB"/>
</dbReference>
<dbReference type="GO" id="GO:0045860">
    <property type="term" value="P:positive regulation of protein kinase activity"/>
    <property type="evidence" value="ECO:0000314"/>
    <property type="project" value="UniProtKB"/>
</dbReference>
<dbReference type="GO" id="GO:0007283">
    <property type="term" value="P:spermatogenesis"/>
    <property type="evidence" value="ECO:0007669"/>
    <property type="project" value="Ensembl"/>
</dbReference>
<dbReference type="GO" id="GO:0016233">
    <property type="term" value="P:telomere capping"/>
    <property type="evidence" value="ECO:0007669"/>
    <property type="project" value="Ensembl"/>
</dbReference>
<dbReference type="InterPro" id="IPR020984">
    <property type="entry name" value="Speedy"/>
</dbReference>
<dbReference type="InterPro" id="IPR052316">
    <property type="entry name" value="Speedy-Ringo_regulator"/>
</dbReference>
<dbReference type="PANTHER" id="PTHR31545">
    <property type="entry name" value="SEEDY PROTEIN A/C FAMILY MEMBER"/>
    <property type="match status" value="1"/>
</dbReference>
<dbReference type="PANTHER" id="PTHR31545:SF4">
    <property type="entry name" value="SPEEDY PROTEIN A"/>
    <property type="match status" value="1"/>
</dbReference>
<dbReference type="Pfam" id="PF11357">
    <property type="entry name" value="Spy1"/>
    <property type="match status" value="1"/>
</dbReference>
<proteinExistence type="evidence at protein level"/>
<accession>Q5MJ70</accession>
<accession>Q53R05</accession>
<accession>Q5MJ69</accession>
<gene>
    <name evidence="16" type="primary">SPDYA</name>
    <name evidence="16" type="synonym">SPDY1</name>
    <name evidence="15" type="synonym">SPY1</name>
</gene>
<keyword id="KW-0002">3D-structure</keyword>
<keyword id="KW-0025">Alternative splicing</keyword>
<keyword id="KW-0131">Cell cycle</keyword>
<keyword id="KW-0217">Developmental protein</keyword>
<keyword id="KW-0227">DNA damage</keyword>
<keyword id="KW-0539">Nucleus</keyword>
<keyword id="KW-0597">Phosphoprotein</keyword>
<keyword id="KW-1185">Reference proteome</keyword>
<sequence>MRHNQMCCETPPTVTVYVKSGSNRSHQPKKPITLKRPICKDNWQAFEKNTHNNNKSKRPKGPCLVIQRQDMTAFFKLFDDDLIQDFLWMDCCCKIADKYLLAMTFVYFKRAKFTISEHTRINFFIALYLANTVEEDEEETKYEIFPWALGKNWRKLFPNFLKLRDQLWDRIDYRAIVSRRCCEEVMAIAPTHYIWQRERSVHHSGAVRNYNRDEVQLPRGPSATPVDCSLCGKKRRYVRLGLSSSSSLSSHTAGVTEKHSQDSYNSLSMDIIGDPSQAYTGSEVVNDHQSNKGKKTNFLKKDKSMEWFTGSEE</sequence>
<feature type="chain" id="PRO_0000234112" description="Speedy protein A">
    <location>
        <begin position="1"/>
        <end position="313"/>
    </location>
</feature>
<feature type="region of interest" description="Speedy/Ringo box; Required for CDK-binding" evidence="8">
    <location>
        <begin position="68"/>
        <end position="200"/>
    </location>
</feature>
<feature type="region of interest" description="Disordered" evidence="2">
    <location>
        <begin position="278"/>
        <end position="313"/>
    </location>
</feature>
<feature type="modified residue" description="Phosphoserine" evidence="1">
    <location>
        <position position="222"/>
    </location>
</feature>
<feature type="modified residue" description="Phosphothreonine" evidence="1">
    <location>
        <position position="224"/>
    </location>
</feature>
<feature type="splice variant" id="VSP_052027" description="In isoform 1." evidence="9 10">
    <original>VVN</original>
    <variation>GMI</variation>
    <location>
        <begin position="284"/>
        <end position="286"/>
    </location>
</feature>
<feature type="splice variant" id="VSP_052028" description="In isoform 1." evidence="9 10">
    <location>
        <begin position="287"/>
        <end position="313"/>
    </location>
</feature>
<feature type="mutagenesis site" description="Loss of CDK2 activation; when associated with Q-135." evidence="8">
    <original>D</original>
    <variation>N</variation>
    <location>
        <position position="97"/>
    </location>
</feature>
<feature type="mutagenesis site" description="Loss of CDK2 activation; when associated with N-97." evidence="8">
    <original>E</original>
    <variation>Q</variation>
    <location>
        <position position="135"/>
    </location>
</feature>
<feature type="strand" evidence="22">
    <location>
        <begin position="64"/>
        <end position="67"/>
    </location>
</feature>
<feature type="helix" evidence="21">
    <location>
        <begin position="72"/>
        <end position="75"/>
    </location>
</feature>
<feature type="helix" evidence="21">
    <location>
        <begin position="76"/>
        <end position="79"/>
    </location>
</feature>
<feature type="helix" evidence="21">
    <location>
        <begin position="81"/>
        <end position="89"/>
    </location>
</feature>
<feature type="strand" evidence="21">
    <location>
        <begin position="94"/>
        <end position="96"/>
    </location>
</feature>
<feature type="helix" evidence="21">
    <location>
        <begin position="98"/>
        <end position="110"/>
    </location>
</feature>
<feature type="helix" evidence="21">
    <location>
        <begin position="115"/>
        <end position="117"/>
    </location>
</feature>
<feature type="helix" evidence="21">
    <location>
        <begin position="120"/>
        <end position="134"/>
    </location>
</feature>
<feature type="helix" evidence="21">
    <location>
        <begin position="140"/>
        <end position="143"/>
    </location>
</feature>
<feature type="helix" evidence="21">
    <location>
        <begin position="144"/>
        <end position="149"/>
    </location>
</feature>
<feature type="helix" evidence="22">
    <location>
        <begin position="150"/>
        <end position="152"/>
    </location>
</feature>
<feature type="helix" evidence="21">
    <location>
        <begin position="153"/>
        <end position="155"/>
    </location>
</feature>
<feature type="helix" evidence="21">
    <location>
        <begin position="157"/>
        <end position="170"/>
    </location>
</feature>
<feature type="turn" evidence="21">
    <location>
        <begin position="171"/>
        <end position="173"/>
    </location>
</feature>
<feature type="helix" evidence="21">
    <location>
        <begin position="179"/>
        <end position="185"/>
    </location>
</feature>
<feature type="strand" evidence="20">
    <location>
        <begin position="187"/>
        <end position="189"/>
    </location>
</feature>
<feature type="helix" evidence="21">
    <location>
        <begin position="193"/>
        <end position="196"/>
    </location>
</feature>